<accession>A5UDR4</accession>
<comment type="function">
    <text evidence="1">Redox regulated molecular chaperone. Protects both thermally unfolding and oxidatively damaged proteins from irreversible aggregation. Plays an important role in the bacterial defense system toward oxidative stress.</text>
</comment>
<comment type="subcellular location">
    <subcellularLocation>
        <location evidence="1">Cytoplasm</location>
    </subcellularLocation>
</comment>
<comment type="PTM">
    <text evidence="1">Under oxidizing conditions two disulfide bonds are formed involving the reactive cysteines. Under reducing conditions zinc is bound to the reactive cysteines and the protein is inactive.</text>
</comment>
<comment type="similarity">
    <text evidence="1">Belongs to the HSP33 family.</text>
</comment>
<keyword id="KW-0143">Chaperone</keyword>
<keyword id="KW-0963">Cytoplasm</keyword>
<keyword id="KW-1015">Disulfide bond</keyword>
<keyword id="KW-0676">Redox-active center</keyword>
<keyword id="KW-0862">Zinc</keyword>
<reference key="1">
    <citation type="journal article" date="2007" name="Genome Biol.">
        <title>Characterization and modeling of the Haemophilus influenzae core and supragenomes based on the complete genomic sequences of Rd and 12 clinical nontypeable strains.</title>
        <authorList>
            <person name="Hogg J.S."/>
            <person name="Hu F.Z."/>
            <person name="Janto B."/>
            <person name="Boissy R."/>
            <person name="Hayes J."/>
            <person name="Keefe R."/>
            <person name="Post J.C."/>
            <person name="Ehrlich G.D."/>
        </authorList>
    </citation>
    <scope>NUCLEOTIDE SEQUENCE [LARGE SCALE GENOMIC DNA]</scope>
    <source>
        <strain>PittEE</strain>
    </source>
</reference>
<protein>
    <recommendedName>
        <fullName evidence="1">33 kDa chaperonin</fullName>
    </recommendedName>
    <alternativeName>
        <fullName evidence="1">Heat shock protein 33 homolog</fullName>
        <shortName evidence="1">HSP33</shortName>
    </alternativeName>
</protein>
<feature type="chain" id="PRO_1000015542" description="33 kDa chaperonin">
    <location>
        <begin position="1"/>
        <end position="293"/>
    </location>
</feature>
<feature type="disulfide bond" description="Redox-active" evidence="1">
    <location>
        <begin position="237"/>
        <end position="239"/>
    </location>
</feature>
<feature type="disulfide bond" description="Redox-active" evidence="1">
    <location>
        <begin position="271"/>
        <end position="274"/>
    </location>
</feature>
<dbReference type="EMBL" id="CP000671">
    <property type="protein sequence ID" value="ABQ98915.1"/>
    <property type="molecule type" value="Genomic_DNA"/>
</dbReference>
<dbReference type="SMR" id="A5UDR4"/>
<dbReference type="KEGG" id="hip:CGSHiEE_08010"/>
<dbReference type="HOGENOM" id="CLU_054493_0_0_6"/>
<dbReference type="GO" id="GO:0005737">
    <property type="term" value="C:cytoplasm"/>
    <property type="evidence" value="ECO:0007669"/>
    <property type="project" value="UniProtKB-SubCell"/>
</dbReference>
<dbReference type="GO" id="GO:0044183">
    <property type="term" value="F:protein folding chaperone"/>
    <property type="evidence" value="ECO:0007669"/>
    <property type="project" value="TreeGrafter"/>
</dbReference>
<dbReference type="GO" id="GO:0051082">
    <property type="term" value="F:unfolded protein binding"/>
    <property type="evidence" value="ECO:0007669"/>
    <property type="project" value="UniProtKB-UniRule"/>
</dbReference>
<dbReference type="GO" id="GO:0042026">
    <property type="term" value="P:protein refolding"/>
    <property type="evidence" value="ECO:0007669"/>
    <property type="project" value="TreeGrafter"/>
</dbReference>
<dbReference type="CDD" id="cd00498">
    <property type="entry name" value="Hsp33"/>
    <property type="match status" value="1"/>
</dbReference>
<dbReference type="Gene3D" id="1.10.287.480">
    <property type="entry name" value="helix hairpin bin"/>
    <property type="match status" value="1"/>
</dbReference>
<dbReference type="Gene3D" id="3.55.30.10">
    <property type="entry name" value="Hsp33 domain"/>
    <property type="match status" value="1"/>
</dbReference>
<dbReference type="Gene3D" id="3.90.1280.10">
    <property type="entry name" value="HSP33 redox switch-like"/>
    <property type="match status" value="1"/>
</dbReference>
<dbReference type="HAMAP" id="MF_00117">
    <property type="entry name" value="HslO"/>
    <property type="match status" value="1"/>
</dbReference>
<dbReference type="InterPro" id="IPR000397">
    <property type="entry name" value="Heat_shock_Hsp33"/>
</dbReference>
<dbReference type="InterPro" id="IPR016154">
    <property type="entry name" value="Heat_shock_Hsp33_C"/>
</dbReference>
<dbReference type="InterPro" id="IPR016153">
    <property type="entry name" value="Heat_shock_Hsp33_N"/>
</dbReference>
<dbReference type="InterPro" id="IPR023212">
    <property type="entry name" value="Hsp33_helix_hairpin_bin_dom_sf"/>
</dbReference>
<dbReference type="NCBIfam" id="NF001033">
    <property type="entry name" value="PRK00114.1"/>
    <property type="match status" value="1"/>
</dbReference>
<dbReference type="PANTHER" id="PTHR30111">
    <property type="entry name" value="33 KDA CHAPERONIN"/>
    <property type="match status" value="1"/>
</dbReference>
<dbReference type="PANTHER" id="PTHR30111:SF1">
    <property type="entry name" value="33 KDA CHAPERONIN"/>
    <property type="match status" value="1"/>
</dbReference>
<dbReference type="Pfam" id="PF01430">
    <property type="entry name" value="HSP33"/>
    <property type="match status" value="1"/>
</dbReference>
<dbReference type="PIRSF" id="PIRSF005261">
    <property type="entry name" value="Heat_shock_Hsp33"/>
    <property type="match status" value="1"/>
</dbReference>
<dbReference type="SUPFAM" id="SSF64397">
    <property type="entry name" value="Hsp33 domain"/>
    <property type="match status" value="1"/>
</dbReference>
<dbReference type="SUPFAM" id="SSF118352">
    <property type="entry name" value="HSP33 redox switch-like"/>
    <property type="match status" value="1"/>
</dbReference>
<gene>
    <name evidence="1" type="primary">hslO</name>
    <name type="ordered locus">CGSHiEE_08010</name>
</gene>
<name>HSLO_HAEIE</name>
<proteinExistence type="inferred from homology"/>
<sequence>MTTQQDYTQDNDKLYRYLFQHRAVRGEWVRLNKTFTDTLNTHQYPKAVQDLLGEMMVATNLLTATLKFDGNITVQIQGDGPLRLALVNGNDQQQIRALARVDGNITENMSLHNMIGKGVLVITIAPKEGERYQGVISLDKPTITECLEDYFVRSEQLQTQLIIRTGEYEGKPVAAGMLLQIMPDGSGTPEDFEHLTTLAATVKDEELFGLPAEELLYRLYHEETVNLYPEQDVQFFCGCSAERSGSALLLISDEEIDEILAEHKGSIDMQCECCGTHYFFNKEAIEKLKSTRV</sequence>
<organism>
    <name type="scientific">Haemophilus influenzae (strain PittEE)</name>
    <dbReference type="NCBI Taxonomy" id="374930"/>
    <lineage>
        <taxon>Bacteria</taxon>
        <taxon>Pseudomonadati</taxon>
        <taxon>Pseudomonadota</taxon>
        <taxon>Gammaproteobacteria</taxon>
        <taxon>Pasteurellales</taxon>
        <taxon>Pasteurellaceae</taxon>
        <taxon>Haemophilus</taxon>
    </lineage>
</organism>
<evidence type="ECO:0000255" key="1">
    <source>
        <dbReference type="HAMAP-Rule" id="MF_00117"/>
    </source>
</evidence>